<keyword id="KW-0833">Ubl conjugation pathway</keyword>
<gene>
    <name type="primary">creD</name>
    <name type="ORF">AFUB_073890</name>
</gene>
<protein>
    <recommendedName>
        <fullName>Probable HECT-type ubiquitin ligase-interacting protein creD</fullName>
    </recommendedName>
    <alternativeName>
        <fullName>Carbon catabolite repressor D</fullName>
    </alternativeName>
</protein>
<dbReference type="EMBL" id="DS499599">
    <property type="protein sequence ID" value="EDP49362.1"/>
    <property type="status" value="ALT_SEQ"/>
    <property type="molecule type" value="Genomic_DNA"/>
</dbReference>
<dbReference type="SMR" id="B0Y7I1"/>
<dbReference type="VEuPathDB" id="FungiDB:AFUB_073890"/>
<dbReference type="OrthoDB" id="82386at5052"/>
<dbReference type="PhylomeDB" id="B0Y7I1"/>
<dbReference type="Proteomes" id="UP000001699">
    <property type="component" value="Unassembled WGS sequence"/>
</dbReference>
<dbReference type="GO" id="GO:0005829">
    <property type="term" value="C:cytosol"/>
    <property type="evidence" value="ECO:0007669"/>
    <property type="project" value="TreeGrafter"/>
</dbReference>
<dbReference type="GO" id="GO:0005886">
    <property type="term" value="C:plasma membrane"/>
    <property type="evidence" value="ECO:0007669"/>
    <property type="project" value="TreeGrafter"/>
</dbReference>
<dbReference type="GO" id="GO:0030674">
    <property type="term" value="F:protein-macromolecule adaptor activity"/>
    <property type="evidence" value="ECO:0007669"/>
    <property type="project" value="TreeGrafter"/>
</dbReference>
<dbReference type="GO" id="GO:0031625">
    <property type="term" value="F:ubiquitin protein ligase binding"/>
    <property type="evidence" value="ECO:0007669"/>
    <property type="project" value="TreeGrafter"/>
</dbReference>
<dbReference type="GO" id="GO:0031396">
    <property type="term" value="P:regulation of protein ubiquitination"/>
    <property type="evidence" value="ECO:0000250"/>
    <property type="project" value="UniProtKB"/>
</dbReference>
<dbReference type="GO" id="GO:0070086">
    <property type="term" value="P:ubiquitin-dependent endocytosis"/>
    <property type="evidence" value="ECO:0007669"/>
    <property type="project" value="TreeGrafter"/>
</dbReference>
<dbReference type="FunFam" id="2.60.40.640:FF:000018">
    <property type="entry name" value="HECT-type ubiquitin ligase-interacting protein creD"/>
    <property type="match status" value="1"/>
</dbReference>
<dbReference type="Gene3D" id="2.60.40.640">
    <property type="match status" value="1"/>
</dbReference>
<dbReference type="InterPro" id="IPR014752">
    <property type="entry name" value="Arrestin-like_C"/>
</dbReference>
<dbReference type="InterPro" id="IPR011021">
    <property type="entry name" value="Arrestin-like_N"/>
</dbReference>
<dbReference type="InterPro" id="IPR011022">
    <property type="entry name" value="Arrestin_C-like"/>
</dbReference>
<dbReference type="InterPro" id="IPR050357">
    <property type="entry name" value="Arrestin_domain-protein"/>
</dbReference>
<dbReference type="InterPro" id="IPR014756">
    <property type="entry name" value="Ig_E-set"/>
</dbReference>
<dbReference type="PANTHER" id="PTHR11188">
    <property type="entry name" value="ARRESTIN DOMAIN CONTAINING PROTEIN"/>
    <property type="match status" value="1"/>
</dbReference>
<dbReference type="PANTHER" id="PTHR11188:SF17">
    <property type="entry name" value="FI21816P1"/>
    <property type="match status" value="1"/>
</dbReference>
<dbReference type="Pfam" id="PF02752">
    <property type="entry name" value="Arrestin_C"/>
    <property type="match status" value="1"/>
</dbReference>
<dbReference type="Pfam" id="PF00339">
    <property type="entry name" value="Arrestin_N"/>
    <property type="match status" value="1"/>
</dbReference>
<dbReference type="SMART" id="SM01017">
    <property type="entry name" value="Arrestin_C"/>
    <property type="match status" value="1"/>
</dbReference>
<dbReference type="SUPFAM" id="SSF81296">
    <property type="entry name" value="E set domains"/>
    <property type="match status" value="1"/>
</dbReference>
<name>CRED_ASPFC</name>
<proteinExistence type="inferred from homology"/>
<organism>
    <name type="scientific">Aspergillus fumigatus (strain CBS 144.89 / FGSC A1163 / CEA10)</name>
    <name type="common">Neosartorya fumigata</name>
    <dbReference type="NCBI Taxonomy" id="451804"/>
    <lineage>
        <taxon>Eukaryota</taxon>
        <taxon>Fungi</taxon>
        <taxon>Dikarya</taxon>
        <taxon>Ascomycota</taxon>
        <taxon>Pezizomycotina</taxon>
        <taxon>Eurotiomycetes</taxon>
        <taxon>Eurotiomycetidae</taxon>
        <taxon>Eurotiales</taxon>
        <taxon>Aspergillaceae</taxon>
        <taxon>Aspergillus</taxon>
        <taxon>Aspergillus subgen. Fumigati</taxon>
    </lineage>
</organism>
<sequence>MALSFFGGGGASHLKYFDIRLDEDYIVFRGGEQEAASAQLSGKLLLCLSEPLSVKHVRLNLTGISRVCWHLPSSSATGGRKSWREKVFYEKSWTFRDAGKSKTEILAAGNYEFPFHVILEGSMPESVEGLSDTYVTYRFKAEIGRKYAKDIVVRKPLRIIRTLDSSALELSHAMSVENIWPNKIEYSISTPTKAVIFGTSIRVDFKLIPLLKGLKIGQIVSQLIESHDLTLNPEDPDSVRNTYKNTRTIVNDEHELDEEGNLEIIDEAAEGYQFSRFLDLPKTLTRCLQDTDTRGIKIRHKLKFRVQLLNPDGHISELRATLPVSIFISPNLAIDDNNNLVDQTPQSAQRAVNDLAQQAPPLYGEHQFDQLYSEVDPSGYRTPGPGSGPGTPFGTLSRNLSAENLASMNALTNTDISASALHSRLSNLHASRFSNPSPSDADGHTDAEYRRLGVSTDSFGPSSGSNSQSPASPELSRRPSDEGYHDHDYIPSGMATPFHPQFAEVESLSRVPSYSTAVRSSVGPCDSELPDYQAVVAEDTAMPTLQSPQQAHIRSVGRGVSTGHTGIDVHHLRSGFFNSRTSAHHDDDDRRLRLVQARARV</sequence>
<evidence type="ECO:0000250" key="1"/>
<evidence type="ECO:0000256" key="2">
    <source>
        <dbReference type="SAM" id="MobiDB-lite"/>
    </source>
</evidence>
<evidence type="ECO:0000305" key="3"/>
<comment type="function">
    <text evidence="1">Component of the regulatory network controlling carbon source utilization through ubiquitination and deubiquitination involving creA, creB, creC, creD and acrB. May be involved in signaling by recognizing appropriately phosphorylated substrates via its arrestin domains and then recruit a HECT-type ubiquitin ligase such as hulA, leading to ubiquitination of the substrate, providing a link between ubiquitination and phosphorylation in protein regulation and stability (By similarity).</text>
</comment>
<comment type="subunit">
    <text evidence="1">Interacts with hulA.</text>
</comment>
<comment type="similarity">
    <text evidence="3">Belongs to the arrestin family.</text>
</comment>
<comment type="sequence caution" evidence="3">
    <conflict type="erroneous gene model prediction">
        <sequence resource="EMBL-CDS" id="EDP49362"/>
    </conflict>
</comment>
<accession>B0Y7I1</accession>
<feature type="chain" id="PRO_0000395696" description="Probable HECT-type ubiquitin ligase-interacting protein creD">
    <location>
        <begin position="1"/>
        <end position="601"/>
    </location>
</feature>
<feature type="region of interest" description="Disordered" evidence="2">
    <location>
        <begin position="374"/>
        <end position="397"/>
    </location>
</feature>
<feature type="region of interest" description="Disordered" evidence="2">
    <location>
        <begin position="454"/>
        <end position="496"/>
    </location>
</feature>
<feature type="compositionally biased region" description="Low complexity" evidence="2">
    <location>
        <begin position="455"/>
        <end position="473"/>
    </location>
</feature>
<feature type="compositionally biased region" description="Basic and acidic residues" evidence="2">
    <location>
        <begin position="475"/>
        <end position="489"/>
    </location>
</feature>
<reference key="1">
    <citation type="journal article" date="2008" name="PLoS Genet.">
        <title>Genomic islands in the pathogenic filamentous fungus Aspergillus fumigatus.</title>
        <authorList>
            <person name="Fedorova N.D."/>
            <person name="Khaldi N."/>
            <person name="Joardar V.S."/>
            <person name="Maiti R."/>
            <person name="Amedeo P."/>
            <person name="Anderson M.J."/>
            <person name="Crabtree J."/>
            <person name="Silva J.C."/>
            <person name="Badger J.H."/>
            <person name="Albarraq A."/>
            <person name="Angiuoli S."/>
            <person name="Bussey H."/>
            <person name="Bowyer P."/>
            <person name="Cotty P.J."/>
            <person name="Dyer P.S."/>
            <person name="Egan A."/>
            <person name="Galens K."/>
            <person name="Fraser-Liggett C.M."/>
            <person name="Haas B.J."/>
            <person name="Inman J.M."/>
            <person name="Kent R."/>
            <person name="Lemieux S."/>
            <person name="Malavazi I."/>
            <person name="Orvis J."/>
            <person name="Roemer T."/>
            <person name="Ronning C.M."/>
            <person name="Sundaram J.P."/>
            <person name="Sutton G."/>
            <person name="Turner G."/>
            <person name="Venter J.C."/>
            <person name="White O.R."/>
            <person name="Whitty B.R."/>
            <person name="Youngman P."/>
            <person name="Wolfe K.H."/>
            <person name="Goldman G.H."/>
            <person name="Wortman J.R."/>
            <person name="Jiang B."/>
            <person name="Denning D.W."/>
            <person name="Nierman W.C."/>
        </authorList>
    </citation>
    <scope>NUCLEOTIDE SEQUENCE [LARGE SCALE GENOMIC DNA]</scope>
    <source>
        <strain>CBS 144.89 / FGSC A1163 / CEA10</strain>
    </source>
</reference>